<dbReference type="EC" id="2.4.1.182" evidence="1"/>
<dbReference type="EMBL" id="CP001233">
    <property type="protein sequence ID" value="ACP06471.1"/>
    <property type="molecule type" value="Genomic_DNA"/>
</dbReference>
<dbReference type="RefSeq" id="WP_001081509.1">
    <property type="nucleotide sequence ID" value="NC_012578.1"/>
</dbReference>
<dbReference type="SMR" id="C3LQ19"/>
<dbReference type="CAZy" id="GT19">
    <property type="family name" value="Glycosyltransferase Family 19"/>
</dbReference>
<dbReference type="KEGG" id="vcm:VCM66_2170"/>
<dbReference type="HOGENOM" id="CLU_036577_3_0_6"/>
<dbReference type="UniPathway" id="UPA00973"/>
<dbReference type="Proteomes" id="UP000001217">
    <property type="component" value="Chromosome I"/>
</dbReference>
<dbReference type="GO" id="GO:0016020">
    <property type="term" value="C:membrane"/>
    <property type="evidence" value="ECO:0007669"/>
    <property type="project" value="GOC"/>
</dbReference>
<dbReference type="GO" id="GO:0008915">
    <property type="term" value="F:lipid-A-disaccharide synthase activity"/>
    <property type="evidence" value="ECO:0007669"/>
    <property type="project" value="UniProtKB-UniRule"/>
</dbReference>
<dbReference type="GO" id="GO:0005543">
    <property type="term" value="F:phospholipid binding"/>
    <property type="evidence" value="ECO:0007669"/>
    <property type="project" value="TreeGrafter"/>
</dbReference>
<dbReference type="GO" id="GO:0009245">
    <property type="term" value="P:lipid A biosynthetic process"/>
    <property type="evidence" value="ECO:0007669"/>
    <property type="project" value="UniProtKB-UniRule"/>
</dbReference>
<dbReference type="HAMAP" id="MF_00392">
    <property type="entry name" value="LpxB"/>
    <property type="match status" value="1"/>
</dbReference>
<dbReference type="InterPro" id="IPR003835">
    <property type="entry name" value="Glyco_trans_19"/>
</dbReference>
<dbReference type="NCBIfam" id="TIGR00215">
    <property type="entry name" value="lpxB"/>
    <property type="match status" value="1"/>
</dbReference>
<dbReference type="PANTHER" id="PTHR30372">
    <property type="entry name" value="LIPID-A-DISACCHARIDE SYNTHASE"/>
    <property type="match status" value="1"/>
</dbReference>
<dbReference type="PANTHER" id="PTHR30372:SF4">
    <property type="entry name" value="LIPID-A-DISACCHARIDE SYNTHASE, MITOCHONDRIAL-RELATED"/>
    <property type="match status" value="1"/>
</dbReference>
<dbReference type="Pfam" id="PF02684">
    <property type="entry name" value="LpxB"/>
    <property type="match status" value="1"/>
</dbReference>
<dbReference type="SUPFAM" id="SSF53756">
    <property type="entry name" value="UDP-Glycosyltransferase/glycogen phosphorylase"/>
    <property type="match status" value="1"/>
</dbReference>
<organism>
    <name type="scientific">Vibrio cholerae serotype O1 (strain M66-2)</name>
    <dbReference type="NCBI Taxonomy" id="579112"/>
    <lineage>
        <taxon>Bacteria</taxon>
        <taxon>Pseudomonadati</taxon>
        <taxon>Pseudomonadota</taxon>
        <taxon>Gammaproteobacteria</taxon>
        <taxon>Vibrionales</taxon>
        <taxon>Vibrionaceae</taxon>
        <taxon>Vibrio</taxon>
    </lineage>
</organism>
<accession>C3LQ19</accession>
<evidence type="ECO:0000255" key="1">
    <source>
        <dbReference type="HAMAP-Rule" id="MF_00392"/>
    </source>
</evidence>
<feature type="chain" id="PRO_1000191491" description="Lipid-A-disaccharide synthase">
    <location>
        <begin position="1"/>
        <end position="379"/>
    </location>
</feature>
<reference key="1">
    <citation type="journal article" date="2008" name="PLoS ONE">
        <title>A recalibrated molecular clock and independent origins for the cholera pandemic clones.</title>
        <authorList>
            <person name="Feng L."/>
            <person name="Reeves P.R."/>
            <person name="Lan R."/>
            <person name="Ren Y."/>
            <person name="Gao C."/>
            <person name="Zhou Z."/>
            <person name="Ren Y."/>
            <person name="Cheng J."/>
            <person name="Wang W."/>
            <person name="Wang J."/>
            <person name="Qian W."/>
            <person name="Li D."/>
            <person name="Wang L."/>
        </authorList>
    </citation>
    <scope>NUCLEOTIDE SEQUENCE [LARGE SCALE GENOMIC DNA]</scope>
    <source>
        <strain>M66-2</strain>
    </source>
</reference>
<comment type="function">
    <text evidence="1">Condensation of UDP-2,3-diacylglucosamine and 2,3-diacylglucosamine-1-phosphate to form lipid A disaccharide, a precursor of lipid A, a phosphorylated glycolipid that anchors the lipopolysaccharide to the outer membrane of the cell.</text>
</comment>
<comment type="catalytic activity">
    <reaction evidence="1">
        <text>a lipid X + a UDP-2-N,3-O-bis[(3R)-3-hydroxyacyl]-alpha-D-glucosamine = a lipid A disaccharide + UDP + H(+)</text>
        <dbReference type="Rhea" id="RHEA:67828"/>
        <dbReference type="ChEBI" id="CHEBI:15378"/>
        <dbReference type="ChEBI" id="CHEBI:58223"/>
        <dbReference type="ChEBI" id="CHEBI:137748"/>
        <dbReference type="ChEBI" id="CHEBI:176338"/>
        <dbReference type="ChEBI" id="CHEBI:176343"/>
        <dbReference type="EC" id="2.4.1.182"/>
    </reaction>
</comment>
<comment type="pathway">
    <text evidence="1">Bacterial outer membrane biogenesis; LPS lipid A biosynthesis.</text>
</comment>
<comment type="similarity">
    <text evidence="1">Belongs to the LpxB family.</text>
</comment>
<keyword id="KW-0328">Glycosyltransferase</keyword>
<keyword id="KW-0441">Lipid A biosynthesis</keyword>
<keyword id="KW-0444">Lipid biosynthesis</keyword>
<keyword id="KW-0443">Lipid metabolism</keyword>
<keyword id="KW-0808">Transferase</keyword>
<name>LPXB_VIBCM</name>
<protein>
    <recommendedName>
        <fullName evidence="1">Lipid-A-disaccharide synthase</fullName>
        <ecNumber evidence="1">2.4.1.182</ecNumber>
    </recommendedName>
</protein>
<gene>
    <name evidence="1" type="primary">lpxB</name>
    <name type="ordered locus">VCM66_2170</name>
</gene>
<proteinExistence type="inferred from homology"/>
<sequence>MNRPLRIGIVVGELSGDTLGEGFIKAIRARYPDAEFVGIGGPKMNALGCQSLFDMEELAVMGLVEVLGRLPRLLKVKAELVKYFTANPPDVFVGIDAPDFNLRLELSLKQAGIKTVHYVSPSVWAWRQNRIHGIAAATHLVLAFLPFEKAFYDKFNVPCEFIGHTLADSIPLASDKLAARQLLGLDEQRRWLAVLPGSRGSEMKMLAEPFIATCQKLQARYPDLGFVVALVNAKRRAQFEQAWQQVAPELNFVLVDDTARNVITAADAVMLASGTVALECMLLKRPMVVGYRVNAFTAFLAKRLLKTPYVSLPNILAGEELVKELLQDHCTVDNLYHEVSRLLESDNQALMDKFTEMHQWIRKDADQQAAQAVLHLIQK</sequence>